<name>RL5_STRS7</name>
<organism>
    <name type="scientific">Streptococcus equi subsp. zooepidemicus (strain H70)</name>
    <dbReference type="NCBI Taxonomy" id="553483"/>
    <lineage>
        <taxon>Bacteria</taxon>
        <taxon>Bacillati</taxon>
        <taxon>Bacillota</taxon>
        <taxon>Bacilli</taxon>
        <taxon>Lactobacillales</taxon>
        <taxon>Streptococcaceae</taxon>
        <taxon>Streptococcus</taxon>
    </lineage>
</organism>
<proteinExistence type="inferred from homology"/>
<sequence length="180" mass="19842">MANRLKEKYTNEVIPALTEKFNYTSVMAVPKVEKIVLNMGVGDAVSNAKNLEKAAAELALISGQKPLITKAKKSIAGFRLREGVAIGAKVTLRGERMYEFLDKLVSVSLPRVRDFHGVPTKSFDGRGNYTLGVKEQLIFPEINFDDVDKVRGLDIVIVTTANTDEESRELLKGLGMPFAK</sequence>
<evidence type="ECO:0000255" key="1">
    <source>
        <dbReference type="HAMAP-Rule" id="MF_01333"/>
    </source>
</evidence>
<evidence type="ECO:0000305" key="2"/>
<dbReference type="EMBL" id="FM204884">
    <property type="protein sequence ID" value="CAW97665.1"/>
    <property type="molecule type" value="Genomic_DNA"/>
</dbReference>
<dbReference type="SMR" id="C0MCC2"/>
<dbReference type="KEGG" id="seq:SZO_00620"/>
<dbReference type="eggNOG" id="COG0094">
    <property type="taxonomic scope" value="Bacteria"/>
</dbReference>
<dbReference type="HOGENOM" id="CLU_061015_2_1_9"/>
<dbReference type="Proteomes" id="UP000001368">
    <property type="component" value="Chromosome"/>
</dbReference>
<dbReference type="GO" id="GO:1990904">
    <property type="term" value="C:ribonucleoprotein complex"/>
    <property type="evidence" value="ECO:0007669"/>
    <property type="project" value="UniProtKB-KW"/>
</dbReference>
<dbReference type="GO" id="GO:0005840">
    <property type="term" value="C:ribosome"/>
    <property type="evidence" value="ECO:0007669"/>
    <property type="project" value="UniProtKB-KW"/>
</dbReference>
<dbReference type="GO" id="GO:0019843">
    <property type="term" value="F:rRNA binding"/>
    <property type="evidence" value="ECO:0007669"/>
    <property type="project" value="UniProtKB-UniRule"/>
</dbReference>
<dbReference type="GO" id="GO:0003735">
    <property type="term" value="F:structural constituent of ribosome"/>
    <property type="evidence" value="ECO:0007669"/>
    <property type="project" value="InterPro"/>
</dbReference>
<dbReference type="GO" id="GO:0000049">
    <property type="term" value="F:tRNA binding"/>
    <property type="evidence" value="ECO:0007669"/>
    <property type="project" value="UniProtKB-UniRule"/>
</dbReference>
<dbReference type="GO" id="GO:0006412">
    <property type="term" value="P:translation"/>
    <property type="evidence" value="ECO:0007669"/>
    <property type="project" value="UniProtKB-UniRule"/>
</dbReference>
<dbReference type="FunFam" id="3.30.1440.10:FF:000001">
    <property type="entry name" value="50S ribosomal protein L5"/>
    <property type="match status" value="1"/>
</dbReference>
<dbReference type="Gene3D" id="3.30.1440.10">
    <property type="match status" value="1"/>
</dbReference>
<dbReference type="HAMAP" id="MF_01333_B">
    <property type="entry name" value="Ribosomal_uL5_B"/>
    <property type="match status" value="1"/>
</dbReference>
<dbReference type="InterPro" id="IPR002132">
    <property type="entry name" value="Ribosomal_uL5"/>
</dbReference>
<dbReference type="InterPro" id="IPR020930">
    <property type="entry name" value="Ribosomal_uL5_bac-type"/>
</dbReference>
<dbReference type="InterPro" id="IPR031309">
    <property type="entry name" value="Ribosomal_uL5_C"/>
</dbReference>
<dbReference type="InterPro" id="IPR020929">
    <property type="entry name" value="Ribosomal_uL5_CS"/>
</dbReference>
<dbReference type="InterPro" id="IPR022803">
    <property type="entry name" value="Ribosomal_uL5_dom_sf"/>
</dbReference>
<dbReference type="InterPro" id="IPR031310">
    <property type="entry name" value="Ribosomal_uL5_N"/>
</dbReference>
<dbReference type="NCBIfam" id="NF000585">
    <property type="entry name" value="PRK00010.1"/>
    <property type="match status" value="1"/>
</dbReference>
<dbReference type="PANTHER" id="PTHR11994">
    <property type="entry name" value="60S RIBOSOMAL PROTEIN L11-RELATED"/>
    <property type="match status" value="1"/>
</dbReference>
<dbReference type="Pfam" id="PF00281">
    <property type="entry name" value="Ribosomal_L5"/>
    <property type="match status" value="1"/>
</dbReference>
<dbReference type="Pfam" id="PF00673">
    <property type="entry name" value="Ribosomal_L5_C"/>
    <property type="match status" value="1"/>
</dbReference>
<dbReference type="PIRSF" id="PIRSF002161">
    <property type="entry name" value="Ribosomal_L5"/>
    <property type="match status" value="1"/>
</dbReference>
<dbReference type="SUPFAM" id="SSF55282">
    <property type="entry name" value="RL5-like"/>
    <property type="match status" value="1"/>
</dbReference>
<dbReference type="PROSITE" id="PS00358">
    <property type="entry name" value="RIBOSOMAL_L5"/>
    <property type="match status" value="1"/>
</dbReference>
<gene>
    <name evidence="1" type="primary">rplE</name>
    <name type="ordered locus">SZO_00620</name>
</gene>
<protein>
    <recommendedName>
        <fullName evidence="1">Large ribosomal subunit protein uL5</fullName>
    </recommendedName>
    <alternativeName>
        <fullName evidence="2">50S ribosomal protein L5</fullName>
    </alternativeName>
</protein>
<accession>C0MCC2</accession>
<reference key="1">
    <citation type="journal article" date="2009" name="PLoS Pathog.">
        <title>Genomic evidence for the evolution of Streptococcus equi: host restriction, increased virulence, and genetic exchange with human pathogens.</title>
        <authorList>
            <person name="Holden M.T.G."/>
            <person name="Heather Z."/>
            <person name="Paillot R."/>
            <person name="Steward K.F."/>
            <person name="Webb K."/>
            <person name="Ainslie F."/>
            <person name="Jourdan T."/>
            <person name="Bason N.C."/>
            <person name="Holroyd N.E."/>
            <person name="Mungall K."/>
            <person name="Quail M.A."/>
            <person name="Sanders M."/>
            <person name="Simmonds M."/>
            <person name="Willey D."/>
            <person name="Brooks K."/>
            <person name="Aanensen D.M."/>
            <person name="Spratt B.G."/>
            <person name="Jolley K.A."/>
            <person name="Maiden M.C.J."/>
            <person name="Kehoe M."/>
            <person name="Chanter N."/>
            <person name="Bentley S.D."/>
            <person name="Robinson C."/>
            <person name="Maskell D.J."/>
            <person name="Parkhill J."/>
            <person name="Waller A.S."/>
        </authorList>
    </citation>
    <scope>NUCLEOTIDE SEQUENCE [LARGE SCALE GENOMIC DNA]</scope>
    <source>
        <strain>H70</strain>
    </source>
</reference>
<feature type="chain" id="PRO_1000214642" description="Large ribosomal subunit protein uL5">
    <location>
        <begin position="1"/>
        <end position="180"/>
    </location>
</feature>
<comment type="function">
    <text evidence="1">This is one of the proteins that bind and probably mediate the attachment of the 5S RNA into the large ribosomal subunit, where it forms part of the central protuberance. In the 70S ribosome it contacts protein S13 of the 30S subunit (bridge B1b), connecting the 2 subunits; this bridge is implicated in subunit movement. Contacts the P site tRNA; the 5S rRNA and some of its associated proteins might help stabilize positioning of ribosome-bound tRNAs.</text>
</comment>
<comment type="subunit">
    <text evidence="1">Part of the 50S ribosomal subunit; part of the 5S rRNA/L5/L18/L25 subcomplex. Contacts the 5S rRNA and the P site tRNA. Forms a bridge to the 30S subunit in the 70S ribosome.</text>
</comment>
<comment type="similarity">
    <text evidence="1">Belongs to the universal ribosomal protein uL5 family.</text>
</comment>
<keyword id="KW-0687">Ribonucleoprotein</keyword>
<keyword id="KW-0689">Ribosomal protein</keyword>
<keyword id="KW-0694">RNA-binding</keyword>
<keyword id="KW-0699">rRNA-binding</keyword>
<keyword id="KW-0820">tRNA-binding</keyword>